<comment type="function">
    <text evidence="1">One of the components of the core complex of photosystem II (PSII). PSII is a light-driven water:plastoquinone oxidoreductase that uses light energy to abstract electrons from H(2)O, generating O(2) and a proton gradient subsequently used for ATP formation. It consists of a core antenna complex that captures photons, and an electron transfer chain that converts photonic excitation into a charge separation.</text>
</comment>
<comment type="subunit">
    <text evidence="1">PSII is composed of 1 copy each of membrane proteins PsbA, PsbB, PsbC, PsbD, PsbE, PsbF, PsbH, PsbI, PsbJ, PsbK, PsbL, PsbM, PsbT, PsbX, PsbY, PsbZ, Psb30/Ycf12, at least 3 peripheral proteins of the oxygen-evolving complex and a large number of cofactors. It forms dimeric complexes.</text>
</comment>
<comment type="subcellular location">
    <subcellularLocation>
        <location evidence="1">Plastid</location>
        <location evidence="1">Chloroplast thylakoid membrane</location>
        <topology evidence="1">Single-pass membrane protein</topology>
    </subcellularLocation>
</comment>
<comment type="similarity">
    <text evidence="1">Belongs to the PsbJ family.</text>
</comment>
<comment type="sequence caution" evidence="2">
    <conflict type="frameshift">
        <sequence resource="EMBL-CDS" id="AAC16327"/>
    </conflict>
</comment>
<comment type="sequence caution" evidence="2">
    <conflict type="frameshift">
        <sequence resource="EMBL-CDS" id="DAA00963"/>
    </conflict>
</comment>
<dbReference type="EMBL" id="AF025877">
    <property type="protein sequence ID" value="AAB80958.1"/>
    <property type="molecule type" value="Genomic_DNA"/>
</dbReference>
<dbReference type="EMBL" id="AF061851">
    <property type="protein sequence ID" value="AAC16327.1"/>
    <property type="status" value="ALT_FRAME"/>
    <property type="molecule type" value="Genomic_DNA"/>
</dbReference>
<dbReference type="EMBL" id="FJ423446">
    <property type="protein sequence ID" value="ACJ50150.1"/>
    <property type="molecule type" value="Genomic_DNA"/>
</dbReference>
<dbReference type="EMBL" id="BK000554">
    <property type="protein sequence ID" value="DAA00963.1"/>
    <property type="status" value="ALT_FRAME"/>
    <property type="molecule type" value="Genomic_DNA"/>
</dbReference>
<dbReference type="PIR" id="T07916">
    <property type="entry name" value="T07916"/>
</dbReference>
<dbReference type="PIR" id="T07954">
    <property type="entry name" value="T07954"/>
</dbReference>
<dbReference type="RefSeq" id="NP_958419.1">
    <property type="nucleotide sequence ID" value="NC_005353.1"/>
</dbReference>
<dbReference type="PDB" id="6KAC">
    <property type="method" value="EM"/>
    <property type="resolution" value="2.70 A"/>
    <property type="chains" value="J/j=1-42"/>
</dbReference>
<dbReference type="PDB" id="6KAD">
    <property type="method" value="EM"/>
    <property type="resolution" value="3.40 A"/>
    <property type="chains" value="J/j=1-42"/>
</dbReference>
<dbReference type="PDBsum" id="6KAC"/>
<dbReference type="PDBsum" id="6KAD"/>
<dbReference type="EMDB" id="EMD-9955"/>
<dbReference type="EMDB" id="EMD-9956"/>
<dbReference type="SMR" id="O19930"/>
<dbReference type="FunCoup" id="O19930">
    <property type="interactions" value="31"/>
</dbReference>
<dbReference type="STRING" id="3055.O19930"/>
<dbReference type="GeneID" id="2716960"/>
<dbReference type="KEGG" id="cre:ChreCp063"/>
<dbReference type="InParanoid" id="O19930"/>
<dbReference type="BioCyc" id="CHLAMY:CHRECP063-MONOMER"/>
<dbReference type="BioCyc" id="MetaCyc:CHRECP063-MONOMER"/>
<dbReference type="Proteomes" id="UP000006906">
    <property type="component" value="Chloroplast"/>
</dbReference>
<dbReference type="GO" id="GO:0009535">
    <property type="term" value="C:chloroplast thylakoid membrane"/>
    <property type="evidence" value="ECO:0007669"/>
    <property type="project" value="UniProtKB-SubCell"/>
</dbReference>
<dbReference type="GO" id="GO:0009523">
    <property type="term" value="C:photosystem II"/>
    <property type="evidence" value="ECO:0000318"/>
    <property type="project" value="GO_Central"/>
</dbReference>
<dbReference type="GO" id="GO:0009539">
    <property type="term" value="C:photosystem II reaction center"/>
    <property type="evidence" value="ECO:0007669"/>
    <property type="project" value="InterPro"/>
</dbReference>
<dbReference type="GO" id="GO:0015979">
    <property type="term" value="P:photosynthesis"/>
    <property type="evidence" value="ECO:0007669"/>
    <property type="project" value="UniProtKB-UniRule"/>
</dbReference>
<dbReference type="Gene3D" id="6.10.250.2070">
    <property type="match status" value="1"/>
</dbReference>
<dbReference type="HAMAP" id="MF_01305">
    <property type="entry name" value="PSII_PsbJ"/>
    <property type="match status" value="1"/>
</dbReference>
<dbReference type="InterPro" id="IPR002682">
    <property type="entry name" value="PSII_PsbJ"/>
</dbReference>
<dbReference type="InterPro" id="IPR037267">
    <property type="entry name" value="PSII_PsbJ_sf"/>
</dbReference>
<dbReference type="PANTHER" id="PTHR34812">
    <property type="entry name" value="PHOTOSYSTEM II REACTION CENTER PROTEIN J"/>
    <property type="match status" value="1"/>
</dbReference>
<dbReference type="PANTHER" id="PTHR34812:SF3">
    <property type="entry name" value="PHOTOSYSTEM II REACTION CENTER PROTEIN J"/>
    <property type="match status" value="1"/>
</dbReference>
<dbReference type="Pfam" id="PF01788">
    <property type="entry name" value="PsbJ"/>
    <property type="match status" value="1"/>
</dbReference>
<dbReference type="SUPFAM" id="SSF161021">
    <property type="entry name" value="Photosystem II reaction center protein J, PsbJ"/>
    <property type="match status" value="1"/>
</dbReference>
<sequence length="42" mass="4290">MSNTGTTGRIPLWLVGTVVGTLAIGLLAVFFYGSYVGLGSSL</sequence>
<geneLocation type="chloroplast"/>
<evidence type="ECO:0000255" key="1">
    <source>
        <dbReference type="HAMAP-Rule" id="MF_01305"/>
    </source>
</evidence>
<evidence type="ECO:0000305" key="2"/>
<evidence type="ECO:0007829" key="3">
    <source>
        <dbReference type="PDB" id="6KAC"/>
    </source>
</evidence>
<gene>
    <name evidence="1" type="primary">psbJ</name>
</gene>
<protein>
    <recommendedName>
        <fullName evidence="1">Photosystem II reaction center protein J</fullName>
        <shortName evidence="1">PSII-J</shortName>
    </recommendedName>
</protein>
<feature type="chain" id="PRO_0000216584" description="Photosystem II reaction center protein J">
    <location>
        <begin position="1"/>
        <end position="42"/>
    </location>
</feature>
<feature type="transmembrane region" description="Helical" evidence="1">
    <location>
        <begin position="10"/>
        <end position="30"/>
    </location>
</feature>
<feature type="helix" evidence="3">
    <location>
        <begin position="12"/>
        <end position="32"/>
    </location>
</feature>
<feature type="turn" evidence="3">
    <location>
        <begin position="33"/>
        <end position="35"/>
    </location>
</feature>
<organism>
    <name type="scientific">Chlamydomonas reinhardtii</name>
    <name type="common">Chlamydomonas smithii</name>
    <dbReference type="NCBI Taxonomy" id="3055"/>
    <lineage>
        <taxon>Eukaryota</taxon>
        <taxon>Viridiplantae</taxon>
        <taxon>Chlorophyta</taxon>
        <taxon>core chlorophytes</taxon>
        <taxon>Chlorophyceae</taxon>
        <taxon>CS clade</taxon>
        <taxon>Chlamydomonadales</taxon>
        <taxon>Chlamydomonadaceae</taxon>
        <taxon>Chlamydomonas</taxon>
    </lineage>
</organism>
<name>PSBJ_CHLRE</name>
<keyword id="KW-0002">3D-structure</keyword>
<keyword id="KW-0150">Chloroplast</keyword>
<keyword id="KW-0472">Membrane</keyword>
<keyword id="KW-0602">Photosynthesis</keyword>
<keyword id="KW-0604">Photosystem II</keyword>
<keyword id="KW-0934">Plastid</keyword>
<keyword id="KW-0674">Reaction center</keyword>
<keyword id="KW-1185">Reference proteome</keyword>
<keyword id="KW-0793">Thylakoid</keyword>
<keyword id="KW-0812">Transmembrane</keyword>
<keyword id="KW-1133">Transmembrane helix</keyword>
<proteinExistence type="evidence at protein level"/>
<accession>O19930</accession>
<accession>B7U1K3</accession>
<accession>O63074</accession>
<reference key="1">
    <citation type="submission" date="1997-09" db="EMBL/GenBank/DDBJ databases">
        <authorList>
            <person name="Purton S."/>
            <person name="Winskill L."/>
            <person name="Watson A.T."/>
        </authorList>
    </citation>
    <scope>NUCLEOTIDE SEQUENCE [GENOMIC DNA]</scope>
</reference>
<reference key="2">
    <citation type="submission" date="1998-04" db="EMBL/GenBank/DDBJ databases">
        <authorList>
            <person name="Hauser C.R."/>
            <person name="Boynton J.E."/>
            <person name="Gillham N.W."/>
        </authorList>
    </citation>
    <scope>NUCLEOTIDE SEQUENCE [GENOMIC DNA]</scope>
</reference>
<reference key="3">
    <citation type="journal article" date="2009" name="BMC Evol. Biol.">
        <title>Nucleotide diversity of the Chlamydomonas reinhardtii plastid genome: addressing the mutational-hazard hypothesis.</title>
        <authorList>
            <person name="Smith D.R."/>
            <person name="Lee R.W."/>
        </authorList>
    </citation>
    <scope>NUCLEOTIDE SEQUENCE [LARGE SCALE GENOMIC DNA]</scope>
    <source>
        <strain>CC-503</strain>
    </source>
</reference>
<reference key="4">
    <citation type="journal article" date="2002" name="Plant Cell">
        <title>The Chlamydomonas reinhardtii plastid chromosome: islands of genes in a sea of repeats.</title>
        <authorList>
            <person name="Maul J.E."/>
            <person name="Lilly J.W."/>
            <person name="Cui L."/>
            <person name="dePamphilis C.W."/>
            <person name="Miller W."/>
            <person name="Harris E.H."/>
            <person name="Stern D.B."/>
        </authorList>
    </citation>
    <scope>IDENTIFICATION</scope>
    <scope>COMPLETE PLASTID GENOME</scope>
</reference>